<comment type="function">
    <text evidence="1">Attaches a formyl group to the free amino group of methionyl-tRNA(fMet). The formyl group appears to play a dual role in the initiator identity of N-formylmethionyl-tRNA by promoting its recognition by IF2 and preventing the misappropriation of this tRNA by the elongation apparatus.</text>
</comment>
<comment type="catalytic activity">
    <reaction evidence="1">
        <text>L-methionyl-tRNA(fMet) + (6R)-10-formyltetrahydrofolate = N-formyl-L-methionyl-tRNA(fMet) + (6S)-5,6,7,8-tetrahydrofolate + H(+)</text>
        <dbReference type="Rhea" id="RHEA:24380"/>
        <dbReference type="Rhea" id="RHEA-COMP:9952"/>
        <dbReference type="Rhea" id="RHEA-COMP:9953"/>
        <dbReference type="ChEBI" id="CHEBI:15378"/>
        <dbReference type="ChEBI" id="CHEBI:57453"/>
        <dbReference type="ChEBI" id="CHEBI:78530"/>
        <dbReference type="ChEBI" id="CHEBI:78844"/>
        <dbReference type="ChEBI" id="CHEBI:195366"/>
        <dbReference type="EC" id="2.1.2.9"/>
    </reaction>
</comment>
<comment type="similarity">
    <text evidence="1">Belongs to the Fmt family.</text>
</comment>
<feature type="chain" id="PRO_0000082915" description="Methionyl-tRNA formyltransferase">
    <location>
        <begin position="1"/>
        <end position="314"/>
    </location>
</feature>
<feature type="binding site" evidence="1">
    <location>
        <begin position="110"/>
        <end position="113"/>
    </location>
    <ligand>
        <name>(6S)-5,6,7,8-tetrahydrofolate</name>
        <dbReference type="ChEBI" id="CHEBI:57453"/>
    </ligand>
</feature>
<proteinExistence type="inferred from homology"/>
<keyword id="KW-0648">Protein biosynthesis</keyword>
<keyword id="KW-0808">Transferase</keyword>
<evidence type="ECO:0000255" key="1">
    <source>
        <dbReference type="HAMAP-Rule" id="MF_00182"/>
    </source>
</evidence>
<reference key="1">
    <citation type="journal article" date="2006" name="J. Bacteriol.">
        <title>Pathogenomic sequence analysis of Bacillus cereus and Bacillus thuringiensis isolates closely related to Bacillus anthracis.</title>
        <authorList>
            <person name="Han C.S."/>
            <person name="Xie G."/>
            <person name="Challacombe J.F."/>
            <person name="Altherr M.R."/>
            <person name="Bhotika S.S."/>
            <person name="Bruce D."/>
            <person name="Campbell C.S."/>
            <person name="Campbell M.L."/>
            <person name="Chen J."/>
            <person name="Chertkov O."/>
            <person name="Cleland C."/>
            <person name="Dimitrijevic M."/>
            <person name="Doggett N.A."/>
            <person name="Fawcett J.J."/>
            <person name="Glavina T."/>
            <person name="Goodwin L.A."/>
            <person name="Hill K.K."/>
            <person name="Hitchcock P."/>
            <person name="Jackson P.J."/>
            <person name="Keim P."/>
            <person name="Kewalramani A.R."/>
            <person name="Longmire J."/>
            <person name="Lucas S."/>
            <person name="Malfatti S."/>
            <person name="McMurry K."/>
            <person name="Meincke L.J."/>
            <person name="Misra M."/>
            <person name="Moseman B.L."/>
            <person name="Mundt M."/>
            <person name="Munk A.C."/>
            <person name="Okinaka R.T."/>
            <person name="Parson-Quintana B."/>
            <person name="Reilly L.P."/>
            <person name="Richardson P."/>
            <person name="Robinson D.L."/>
            <person name="Rubin E."/>
            <person name="Saunders E."/>
            <person name="Tapia R."/>
            <person name="Tesmer J.G."/>
            <person name="Thayer N."/>
            <person name="Thompson L.S."/>
            <person name="Tice H."/>
            <person name="Ticknor L.O."/>
            <person name="Wills P.L."/>
            <person name="Brettin T.S."/>
            <person name="Gilna P."/>
        </authorList>
    </citation>
    <scope>NUCLEOTIDE SEQUENCE [LARGE SCALE GENOMIC DNA]</scope>
    <source>
        <strain>97-27</strain>
    </source>
</reference>
<protein>
    <recommendedName>
        <fullName evidence="1">Methionyl-tRNA formyltransferase</fullName>
        <ecNumber evidence="1">2.1.2.9</ecNumber>
    </recommendedName>
</protein>
<organism>
    <name type="scientific">Bacillus thuringiensis subsp. konkukian (strain 97-27)</name>
    <dbReference type="NCBI Taxonomy" id="281309"/>
    <lineage>
        <taxon>Bacteria</taxon>
        <taxon>Bacillati</taxon>
        <taxon>Bacillota</taxon>
        <taxon>Bacilli</taxon>
        <taxon>Bacillales</taxon>
        <taxon>Bacillaceae</taxon>
        <taxon>Bacillus</taxon>
        <taxon>Bacillus cereus group</taxon>
    </lineage>
</organism>
<sequence length="314" mass="34794">MIKVVFMGTPDFSVPVLRRLIEDGYDVIGVVTQPDRPVGRKKVLTPTPVKVEAEKHDIPVLQPLRIREKDEYEKVLALEPDLIVTAAFGQIVPNEILEAPKYGCINVHASLLPELRGGAPIHYAIMEGKEKTGITIMYMVEKLDAGDILTQVEVEIEERETTGSLFDKLSEAGAHLLSKTVPLLIQGKLEPIKQNEEEVTFAYNIKREQEKIDWTKTGEEVYNHIRGLNPWPVAYTTLAGQVVKVWWGEKVPVTKSAEAGTIVAIEEDGFVVATGNETGVKITELQPSGKKRMSCSQFLRGTKPEIGTKLGENA</sequence>
<dbReference type="EC" id="2.1.2.9" evidence="1"/>
<dbReference type="EMBL" id="AE017355">
    <property type="protein sequence ID" value="AAT60624.1"/>
    <property type="molecule type" value="Genomic_DNA"/>
</dbReference>
<dbReference type="RefSeq" id="WP_000598785.1">
    <property type="nucleotide sequence ID" value="NC_005957.1"/>
</dbReference>
<dbReference type="RefSeq" id="YP_037927.1">
    <property type="nucleotide sequence ID" value="NC_005957.1"/>
</dbReference>
<dbReference type="SMR" id="Q6HEU9"/>
<dbReference type="KEGG" id="btk:BT9727_3607"/>
<dbReference type="PATRIC" id="fig|281309.8.peg.3845"/>
<dbReference type="HOGENOM" id="CLU_033347_1_1_9"/>
<dbReference type="Proteomes" id="UP000001301">
    <property type="component" value="Chromosome"/>
</dbReference>
<dbReference type="GO" id="GO:0005829">
    <property type="term" value="C:cytosol"/>
    <property type="evidence" value="ECO:0007669"/>
    <property type="project" value="TreeGrafter"/>
</dbReference>
<dbReference type="GO" id="GO:0004479">
    <property type="term" value="F:methionyl-tRNA formyltransferase activity"/>
    <property type="evidence" value="ECO:0007669"/>
    <property type="project" value="UniProtKB-UniRule"/>
</dbReference>
<dbReference type="CDD" id="cd08646">
    <property type="entry name" value="FMT_core_Met-tRNA-FMT_N"/>
    <property type="match status" value="1"/>
</dbReference>
<dbReference type="CDD" id="cd08704">
    <property type="entry name" value="Met_tRNA_FMT_C"/>
    <property type="match status" value="1"/>
</dbReference>
<dbReference type="FunFam" id="3.10.25.10:FF:000003">
    <property type="entry name" value="Methionyl-tRNA formyltransferase"/>
    <property type="match status" value="1"/>
</dbReference>
<dbReference type="FunFam" id="3.40.50.170:FF:000004">
    <property type="entry name" value="Methionyl-tRNA formyltransferase"/>
    <property type="match status" value="1"/>
</dbReference>
<dbReference type="Gene3D" id="3.10.25.10">
    <property type="entry name" value="Formyl transferase, C-terminal domain"/>
    <property type="match status" value="1"/>
</dbReference>
<dbReference type="Gene3D" id="3.40.50.170">
    <property type="entry name" value="Formyl transferase, N-terminal domain"/>
    <property type="match status" value="1"/>
</dbReference>
<dbReference type="HAMAP" id="MF_00182">
    <property type="entry name" value="Formyl_trans"/>
    <property type="match status" value="1"/>
</dbReference>
<dbReference type="InterPro" id="IPR005794">
    <property type="entry name" value="Fmt"/>
</dbReference>
<dbReference type="InterPro" id="IPR005793">
    <property type="entry name" value="Formyl_trans_C"/>
</dbReference>
<dbReference type="InterPro" id="IPR037022">
    <property type="entry name" value="Formyl_trans_C_sf"/>
</dbReference>
<dbReference type="InterPro" id="IPR002376">
    <property type="entry name" value="Formyl_transf_N"/>
</dbReference>
<dbReference type="InterPro" id="IPR036477">
    <property type="entry name" value="Formyl_transf_N_sf"/>
</dbReference>
<dbReference type="InterPro" id="IPR011034">
    <property type="entry name" value="Formyl_transferase-like_C_sf"/>
</dbReference>
<dbReference type="InterPro" id="IPR001555">
    <property type="entry name" value="GART_AS"/>
</dbReference>
<dbReference type="InterPro" id="IPR044135">
    <property type="entry name" value="Met-tRNA-FMT_C"/>
</dbReference>
<dbReference type="InterPro" id="IPR041711">
    <property type="entry name" value="Met-tRNA-FMT_N"/>
</dbReference>
<dbReference type="NCBIfam" id="TIGR00460">
    <property type="entry name" value="fmt"/>
    <property type="match status" value="1"/>
</dbReference>
<dbReference type="PANTHER" id="PTHR11138">
    <property type="entry name" value="METHIONYL-TRNA FORMYLTRANSFERASE"/>
    <property type="match status" value="1"/>
</dbReference>
<dbReference type="PANTHER" id="PTHR11138:SF5">
    <property type="entry name" value="METHIONYL-TRNA FORMYLTRANSFERASE, MITOCHONDRIAL"/>
    <property type="match status" value="1"/>
</dbReference>
<dbReference type="Pfam" id="PF02911">
    <property type="entry name" value="Formyl_trans_C"/>
    <property type="match status" value="1"/>
</dbReference>
<dbReference type="Pfam" id="PF00551">
    <property type="entry name" value="Formyl_trans_N"/>
    <property type="match status" value="1"/>
</dbReference>
<dbReference type="SUPFAM" id="SSF50486">
    <property type="entry name" value="FMT C-terminal domain-like"/>
    <property type="match status" value="1"/>
</dbReference>
<dbReference type="SUPFAM" id="SSF53328">
    <property type="entry name" value="Formyltransferase"/>
    <property type="match status" value="1"/>
</dbReference>
<dbReference type="PROSITE" id="PS00373">
    <property type="entry name" value="GART"/>
    <property type="match status" value="1"/>
</dbReference>
<accession>Q6HEU9</accession>
<gene>
    <name evidence="1" type="primary">fmt</name>
    <name type="ordered locus">BT9727_3607</name>
</gene>
<name>FMT_BACHK</name>